<organism>
    <name type="scientific">Oryctolagus cuniculus</name>
    <name type="common">Rabbit</name>
    <dbReference type="NCBI Taxonomy" id="9986"/>
    <lineage>
        <taxon>Eukaryota</taxon>
        <taxon>Metazoa</taxon>
        <taxon>Chordata</taxon>
        <taxon>Craniata</taxon>
        <taxon>Vertebrata</taxon>
        <taxon>Euteleostomi</taxon>
        <taxon>Mammalia</taxon>
        <taxon>Eutheria</taxon>
        <taxon>Euarchontoglires</taxon>
        <taxon>Glires</taxon>
        <taxon>Lagomorpha</taxon>
        <taxon>Leporidae</taxon>
        <taxon>Oryctolagus</taxon>
    </lineage>
</organism>
<comment type="function">
    <text>Microbicidal activity.</text>
</comment>
<comment type="subcellular location">
    <subcellularLocation>
        <location>Secreted</location>
    </subcellularLocation>
</comment>
<comment type="similarity">
    <text evidence="4">Belongs to the alpha-defensin family.</text>
</comment>
<protein>
    <recommendedName>
        <fullName>Neutrophil antibiotic peptide NP-4</fullName>
    </recommendedName>
    <alternativeName>
        <fullName>Microbicidal peptide NP-4</fullName>
    </alternativeName>
</protein>
<keyword id="KW-0044">Antibiotic</keyword>
<keyword id="KW-0929">Antimicrobial</keyword>
<keyword id="KW-0211">Defensin</keyword>
<keyword id="KW-0903">Direct protein sequencing</keyword>
<keyword id="KW-1015">Disulfide bond</keyword>
<keyword id="KW-1185">Reference proteome</keyword>
<keyword id="KW-0964">Secreted</keyword>
<keyword id="KW-0732">Signal</keyword>
<sequence length="95" mass="10181">MRTLALLAAILLVTLQAQAELHSGMADDGVDQQQPRAQDLDVAVYIKQDETSPLEVLGAKAGVSCTCRRFSCGFGERASGSCTVNGVRHTLCCRR</sequence>
<accession>P07467</accession>
<name>DEF5_RABIT</name>
<feature type="signal peptide" evidence="2">
    <location>
        <begin position="1"/>
        <end position="19"/>
    </location>
</feature>
<feature type="propeptide" id="PRO_0000006813" evidence="3">
    <location>
        <begin position="20"/>
        <end position="62"/>
    </location>
</feature>
<feature type="peptide" id="PRO_0000006814" description="Neutrophil antibiotic peptide NP-4">
    <location>
        <begin position="63"/>
        <end position="95"/>
    </location>
</feature>
<feature type="disulfide bond" evidence="1">
    <location>
        <begin position="65"/>
        <end position="93"/>
    </location>
</feature>
<feature type="disulfide bond" evidence="1">
    <location>
        <begin position="67"/>
        <end position="82"/>
    </location>
</feature>
<feature type="disulfide bond" evidence="1">
    <location>
        <begin position="72"/>
        <end position="92"/>
    </location>
</feature>
<reference key="1">
    <citation type="journal article" date="1992" name="J. Leukoc. Biol.">
        <title>Cationic defensins arise from charge-neutralized propeptides: a mechanism for avoiding leukocyte autocytotoxicity?</title>
        <authorList>
            <person name="Michaelson D."/>
            <person name="Couto M."/>
            <person name="Rayner J.R."/>
            <person name="Ganz T."/>
        </authorList>
    </citation>
    <scope>NUCLEOTIDE SEQUENCE [MRNA]</scope>
</reference>
<reference key="2">
    <citation type="journal article" date="1985" name="J. Biol. Chem.">
        <title>Primary structures of six antimicrobial peptides of rabbit peritoneal neutrophils.</title>
        <authorList>
            <person name="Selsted M.E."/>
            <person name="Brown D.M."/>
            <person name="Delange R.J."/>
            <person name="Harwig S.S.L."/>
            <person name="Lehrer R.I."/>
        </authorList>
    </citation>
    <scope>PROTEIN SEQUENCE OF 63-95</scope>
    <source>
        <tissue>Peritoneal neutrophil</tissue>
    </source>
</reference>
<evidence type="ECO:0000250" key="1"/>
<evidence type="ECO:0000255" key="2"/>
<evidence type="ECO:0000269" key="3">
    <source>
    </source>
</evidence>
<evidence type="ECO:0000305" key="4"/>
<proteinExistence type="evidence at protein level"/>
<dbReference type="EMBL" id="M64601">
    <property type="protein sequence ID" value="AAA31238.1"/>
    <property type="molecule type" value="mRNA"/>
</dbReference>
<dbReference type="PIR" id="I46705">
    <property type="entry name" value="I46705"/>
</dbReference>
<dbReference type="RefSeq" id="NP_001075768.1">
    <property type="nucleotide sequence ID" value="NM_001082299.1"/>
</dbReference>
<dbReference type="RefSeq" id="XP_008272397.1">
    <property type="nucleotide sequence ID" value="XM_008274175.2"/>
</dbReference>
<dbReference type="SMR" id="P07467"/>
<dbReference type="STRING" id="9986.ENSOCUP00000020922"/>
<dbReference type="PaxDb" id="9986-ENSOCUP00000020922"/>
<dbReference type="GeneID" id="100009135"/>
<dbReference type="KEGG" id="ocu:100009135"/>
<dbReference type="eggNOG" id="ENOG502T2EX">
    <property type="taxonomic scope" value="Eukaryota"/>
</dbReference>
<dbReference type="HOGENOM" id="CLU_160803_3_0_1"/>
<dbReference type="InParanoid" id="P07467"/>
<dbReference type="OMA" id="CRTSRCY"/>
<dbReference type="OrthoDB" id="9837636at2759"/>
<dbReference type="TreeFam" id="TF338414"/>
<dbReference type="Proteomes" id="UP000001811">
    <property type="component" value="Unplaced"/>
</dbReference>
<dbReference type="GO" id="GO:0031012">
    <property type="term" value="C:extracellular matrix"/>
    <property type="evidence" value="ECO:0007669"/>
    <property type="project" value="TreeGrafter"/>
</dbReference>
<dbReference type="GO" id="GO:0005615">
    <property type="term" value="C:extracellular space"/>
    <property type="evidence" value="ECO:0007669"/>
    <property type="project" value="InterPro"/>
</dbReference>
<dbReference type="GO" id="GO:0019731">
    <property type="term" value="P:antibacterial humoral response"/>
    <property type="evidence" value="ECO:0007669"/>
    <property type="project" value="TreeGrafter"/>
</dbReference>
<dbReference type="GO" id="GO:0061844">
    <property type="term" value="P:antimicrobial humoral immune response mediated by antimicrobial peptide"/>
    <property type="evidence" value="ECO:0007669"/>
    <property type="project" value="TreeGrafter"/>
</dbReference>
<dbReference type="GO" id="GO:0071222">
    <property type="term" value="P:cellular response to lipopolysaccharide"/>
    <property type="evidence" value="ECO:0007669"/>
    <property type="project" value="TreeGrafter"/>
</dbReference>
<dbReference type="GO" id="GO:0050829">
    <property type="term" value="P:defense response to Gram-negative bacterium"/>
    <property type="evidence" value="ECO:0007669"/>
    <property type="project" value="TreeGrafter"/>
</dbReference>
<dbReference type="GO" id="GO:0050830">
    <property type="term" value="P:defense response to Gram-positive bacterium"/>
    <property type="evidence" value="ECO:0007669"/>
    <property type="project" value="TreeGrafter"/>
</dbReference>
<dbReference type="GO" id="GO:0051673">
    <property type="term" value="P:disruption of plasma membrane integrity in another organism"/>
    <property type="evidence" value="ECO:0007669"/>
    <property type="project" value="TreeGrafter"/>
</dbReference>
<dbReference type="GO" id="GO:0002227">
    <property type="term" value="P:innate immune response in mucosa"/>
    <property type="evidence" value="ECO:0007669"/>
    <property type="project" value="TreeGrafter"/>
</dbReference>
<dbReference type="InterPro" id="IPR016327">
    <property type="entry name" value="Alpha-defensin"/>
</dbReference>
<dbReference type="InterPro" id="IPR006081">
    <property type="entry name" value="Alpha-defensin_C"/>
</dbReference>
<dbReference type="InterPro" id="IPR002366">
    <property type="entry name" value="Alpha-defensin_N"/>
</dbReference>
<dbReference type="InterPro" id="IPR006080">
    <property type="entry name" value="Beta/alpha-defensin_C"/>
</dbReference>
<dbReference type="PANTHER" id="PTHR11876">
    <property type="entry name" value="ALPHA-DEFENSIN 1"/>
    <property type="match status" value="1"/>
</dbReference>
<dbReference type="PANTHER" id="PTHR11876:SF28">
    <property type="entry name" value="ALPHA-DEFENSIN 1"/>
    <property type="match status" value="1"/>
</dbReference>
<dbReference type="Pfam" id="PF00323">
    <property type="entry name" value="Defensin_1"/>
    <property type="match status" value="1"/>
</dbReference>
<dbReference type="Pfam" id="PF00879">
    <property type="entry name" value="Defensin_propep"/>
    <property type="match status" value="1"/>
</dbReference>
<dbReference type="PIRSF" id="PIRSF001875">
    <property type="entry name" value="Alpha-defensin"/>
    <property type="match status" value="1"/>
</dbReference>
<dbReference type="SMART" id="SM01418">
    <property type="entry name" value="Defensin_propep"/>
    <property type="match status" value="1"/>
</dbReference>
<dbReference type="SMART" id="SM00048">
    <property type="entry name" value="DEFSN"/>
    <property type="match status" value="1"/>
</dbReference>
<dbReference type="SUPFAM" id="SSF57392">
    <property type="entry name" value="Defensin-like"/>
    <property type="match status" value="1"/>
</dbReference>
<dbReference type="PROSITE" id="PS00269">
    <property type="entry name" value="DEFENSIN"/>
    <property type="match status" value="1"/>
</dbReference>